<organism>
    <name type="scientific">Ovine respiratory syncytial virus (strain WSU 83-1578)</name>
    <name type="common">ORSV</name>
    <dbReference type="NCBI Taxonomy" id="79699"/>
    <lineage>
        <taxon>Viruses</taxon>
        <taxon>Riboviria</taxon>
        <taxon>Orthornavirae</taxon>
        <taxon>Negarnaviricota</taxon>
        <taxon>Haploviricotina</taxon>
        <taxon>Monjiviricetes</taxon>
        <taxon>Mononegavirales</taxon>
        <taxon>Pneumoviridae</taxon>
        <taxon>Ovine respiratory syncytial virus</taxon>
    </lineage>
</organism>
<reference key="1">
    <citation type="journal article" date="1994" name="J. Gen. Virol.">
        <title>Molecular cloning and sequence analysis of the phosphoprotein, nucleocapsid protein, matrix protein and 22K (M2) protein of the ovine respiratory syncytial virus.</title>
        <authorList>
            <person name="Alansari H.M."/>
            <person name="Potgieter L.N.D."/>
        </authorList>
    </citation>
    <scope>NUCLEOTIDE SEQUENCE [MRNA]</scope>
</reference>
<organismHost>
    <name type="scientific">Ovis aries</name>
    <name type="common">Sheep</name>
    <dbReference type="NCBI Taxonomy" id="9940"/>
</organismHost>
<keyword id="KW-1032">Host cell membrane</keyword>
<keyword id="KW-1035">Host cytoplasm</keyword>
<keyword id="KW-1043">Host membrane</keyword>
<keyword id="KW-1048">Host nucleus</keyword>
<keyword id="KW-0945">Host-virus interaction</keyword>
<keyword id="KW-0472">Membrane</keyword>
<keyword id="KW-0468">Viral matrix protein</keyword>
<keyword id="KW-0946">Virion</keyword>
<gene>
    <name type="primary">M</name>
</gene>
<proteinExistence type="evidence at transcript level"/>
<accession>Q84131</accession>
<feature type="chain" id="PRO_0000142747" description="Matrix protein">
    <location>
        <begin position="1"/>
        <end position="256"/>
    </location>
</feature>
<sequence length="256" mass="28726">METYVNKLHEGSTYTAAVQYNVLEKDDDPASLTIWVPMFQSSISADLLIKELINVNILVRQISTLKGPSLKIMINSRSAVLAQMPNKFTISANVSLDERSKLAYDITTPCEIKACSLTCLKVKNMLTTVKDLTMKTFNPTHEIIALCEFENIMTSKKVVIPTFLRSINVKAKDLDSLENIATTEFKNAITNAKIIPYAGLVLVITVTDNKGAFKYIKPQSQFIVDLGAYLEKESIYYVTTNWKHTATRFSIKPIED</sequence>
<comment type="function">
    <text evidence="1">Plays a crucial role in virus assembly into filaments and budding. Early in infection, localizes in the nucleus where it may inhibit host cell transcription. Later in infection, traffics to the cytoplasm to associate with inclusion bodies, the site of viral transcription and replication. During virus assembly and budding, acts as a bridge between the nucleocapsid and the lipid bilayer.</text>
</comment>
<comment type="subunit">
    <text evidence="1">Forms dimers. Forms higher-order oligomers. Interacts with glycoprotein G (via N-terminus). Interacts with protein M2-1; this interaction directs the matrix protein localization to cytoplasmic inclusions comprising viral proteins L, N, P, and M2-1 and mediates the matrix protein association with the nucleocapsid.</text>
</comment>
<comment type="subcellular location">
    <subcellularLocation>
        <location evidence="1">Virion</location>
    </subcellularLocation>
    <subcellularLocation>
        <location evidence="1">Host cytoplasm</location>
    </subcellularLocation>
    <subcellularLocation>
        <location evidence="1">Host nucleus</location>
    </subcellularLocation>
    <subcellularLocation>
        <location evidence="1">Host cell membrane</location>
        <topology evidence="1">Peripheral membrane protein</topology>
        <orientation evidence="1">Cytoplasmic side</orientation>
    </subcellularLocation>
    <text evidence="1">In the cytoplasm, associates with inclusion bodies. During bud formation, associates at the inner side of the plasma membrane of infected cells.</text>
</comment>
<comment type="similarity">
    <text evidence="2">Belongs to the pneumovirinae M protein family.</text>
</comment>
<name>MATRX_ORSVW</name>
<protein>
    <recommendedName>
        <fullName>Matrix protein</fullName>
    </recommendedName>
    <alternativeName>
        <fullName evidence="1">M protein</fullName>
    </alternativeName>
</protein>
<dbReference type="EMBL" id="U02470">
    <property type="protein sequence ID" value="AAA96339.1"/>
    <property type="molecule type" value="mRNA"/>
</dbReference>
<dbReference type="SMR" id="Q84131"/>
<dbReference type="GO" id="GO:0030430">
    <property type="term" value="C:host cell cytoplasm"/>
    <property type="evidence" value="ECO:0007669"/>
    <property type="project" value="UniProtKB-SubCell"/>
</dbReference>
<dbReference type="GO" id="GO:0042025">
    <property type="term" value="C:host cell nucleus"/>
    <property type="evidence" value="ECO:0007669"/>
    <property type="project" value="UniProtKB-SubCell"/>
</dbReference>
<dbReference type="GO" id="GO:0020002">
    <property type="term" value="C:host cell plasma membrane"/>
    <property type="evidence" value="ECO:0007669"/>
    <property type="project" value="UniProtKB-SubCell"/>
</dbReference>
<dbReference type="GO" id="GO:0016020">
    <property type="term" value="C:membrane"/>
    <property type="evidence" value="ECO:0007669"/>
    <property type="project" value="UniProtKB-KW"/>
</dbReference>
<dbReference type="GO" id="GO:0019031">
    <property type="term" value="C:viral envelope"/>
    <property type="evidence" value="ECO:0007669"/>
    <property type="project" value="InterPro"/>
</dbReference>
<dbReference type="GO" id="GO:0039660">
    <property type="term" value="F:structural constituent of virion"/>
    <property type="evidence" value="ECO:0007669"/>
    <property type="project" value="UniProtKB-KW"/>
</dbReference>
<dbReference type="GO" id="GO:0019068">
    <property type="term" value="P:virion assembly"/>
    <property type="evidence" value="ECO:0007669"/>
    <property type="project" value="InterPro"/>
</dbReference>
<dbReference type="Gene3D" id="2.70.20.30">
    <property type="entry name" value="HRSV-S2 matrix protein, N-terminal domain"/>
    <property type="match status" value="1"/>
</dbReference>
<dbReference type="InterPro" id="IPR055461">
    <property type="entry name" value="Matrix_Pneumo_C"/>
</dbReference>
<dbReference type="InterPro" id="IPR005056">
    <property type="entry name" value="MATRX_N_pneumovirus"/>
</dbReference>
<dbReference type="InterPro" id="IPR043062">
    <property type="entry name" value="Pneu_matrix_N"/>
</dbReference>
<dbReference type="Pfam" id="PF23766">
    <property type="entry name" value="Matrix_Pneumo_C"/>
    <property type="match status" value="1"/>
</dbReference>
<dbReference type="Pfam" id="PF03393">
    <property type="entry name" value="Matrix_Pneumo_N"/>
    <property type="match status" value="1"/>
</dbReference>
<evidence type="ECO:0000250" key="1">
    <source>
        <dbReference type="UniProtKB" id="P0DOE7"/>
    </source>
</evidence>
<evidence type="ECO:0000305" key="2"/>